<proteinExistence type="inferred from homology"/>
<keyword id="KW-0067">ATP-binding</keyword>
<keyword id="KW-0227">DNA damage</keyword>
<keyword id="KW-0234">DNA repair</keyword>
<keyword id="KW-0238">DNA-binding</keyword>
<keyword id="KW-0547">Nucleotide-binding</keyword>
<keyword id="KW-1185">Reference proteome</keyword>
<organism>
    <name type="scientific">Geobacillus kaustophilus (strain HTA426)</name>
    <dbReference type="NCBI Taxonomy" id="235909"/>
    <lineage>
        <taxon>Bacteria</taxon>
        <taxon>Bacillati</taxon>
        <taxon>Bacillota</taxon>
        <taxon>Bacilli</taxon>
        <taxon>Bacillales</taxon>
        <taxon>Anoxybacillaceae</taxon>
        <taxon>Geobacillus</taxon>
        <taxon>Geobacillus thermoleovorans group</taxon>
    </lineage>
</organism>
<comment type="function">
    <text evidence="1">This protein is involved in the repair of mismatches in DNA. It is possible that it carries out the mismatch recognition step. This protein has a weak ATPase activity.</text>
</comment>
<comment type="similarity">
    <text evidence="1">Belongs to the DNA mismatch repair MutS family.</text>
</comment>
<accession>Q5L0E5</accession>
<evidence type="ECO:0000255" key="1">
    <source>
        <dbReference type="HAMAP-Rule" id="MF_00096"/>
    </source>
</evidence>
<feature type="chain" id="PRO_0000224374" description="DNA mismatch repair protein MutS">
    <location>
        <begin position="1"/>
        <end position="896"/>
    </location>
</feature>
<feature type="binding site" evidence="1">
    <location>
        <begin position="599"/>
        <end position="606"/>
    </location>
    <ligand>
        <name>ATP</name>
        <dbReference type="ChEBI" id="CHEBI:30616"/>
    </ligand>
</feature>
<reference key="1">
    <citation type="journal article" date="2004" name="Nucleic Acids Res.">
        <title>Thermoadaptation trait revealed by the genome sequence of thermophilic Geobacillus kaustophilus.</title>
        <authorList>
            <person name="Takami H."/>
            <person name="Takaki Y."/>
            <person name="Chee G.-J."/>
            <person name="Nishi S."/>
            <person name="Shimamura S."/>
            <person name="Suzuki H."/>
            <person name="Matsui S."/>
            <person name="Uchiyama I."/>
        </authorList>
    </citation>
    <scope>NUCLEOTIDE SEQUENCE [LARGE SCALE GENOMIC DNA]</scope>
    <source>
        <strain>HTA426</strain>
    </source>
</reference>
<gene>
    <name evidence="1" type="primary">mutS</name>
    <name type="ordered locus">GK1306</name>
</gene>
<name>MUTS_GEOKA</name>
<protein>
    <recommendedName>
        <fullName evidence="1">DNA mismatch repair protein MutS</fullName>
    </recommendedName>
</protein>
<sequence length="896" mass="100665">MIQQYLHIKAQYPDAFLFFRLGDFYELFFDDAIKAAQELEITLTSRDGGDERVPMCGVPYHSAQGYIEQLIEKGYKVAICEQVEDPKTAKGVVRREVVQLITPGTLMEGKGLTEKENHYLAALTPFADGTYGLAYADLSTGEVRLTLLSSWEEAANELHAVGAREIIVATDSGEEWVRELKERYGAAVSYEDDTSLCDEWNGVIGHVAQEKLRQAAARLLHYLVRTQKRRLDHLQPAELYQVDHYMKMDRHSKLHLELVETVRSKGRKGSLLWLLDETVTAMGGRLLKQWLDRPLIDRREIERRLDFVETLKTSYFERQELRDRLRGVYDIERLVGRVSYGNANARDLVQLKKSLLQVPALRQTVGALPLAEADKLCERLDPCEELVDLLERSIQEQPPLSVKEGNLIKDGYDKQLDRYRDASRNGKAWIAELEAKEREATGIKSLKVGYNRVFGYYIEVTKPNLPLVPEGRYERKQTLANAERFITPELKEKEALILEAEEKSIELEYELFVAIREQVKQYIPRLQTLAKAIAELDVLQSFATISDEYRYVRPQFSTERVLVIQGGRHPVVEKVLGAQMYVPNDCYMNREREMLLITGPNMAGKSTYMRQVALTAVMAQIGCFVPAERAVLPIFDQVFTRIGAADDLSAGQSTFMVEMLEARHAIAHATQNSLILFDEIGRGTSTYDGMALAQAIIEYIHDHIGAKTLFSTHYHELTALERSLPRLSNVHARAIEENGKVVFLHQIADGPADKSYGIHVAELAGLPASLIERARAILAELEKAAGKQEAAAGRMDDGALAEAGLAFQGNEALDVGSKVEREKASRPSAGAAREGVLAEAAFEQLSMFPDLAPAPVEPPLSSKEKKALAALKEINLLEMTPLEALNKLYELQKLLK</sequence>
<dbReference type="EMBL" id="BA000043">
    <property type="protein sequence ID" value="BAD75591.1"/>
    <property type="molecule type" value="Genomic_DNA"/>
</dbReference>
<dbReference type="SMR" id="Q5L0E5"/>
<dbReference type="STRING" id="235909.GK1306"/>
<dbReference type="KEGG" id="gka:GK1306"/>
<dbReference type="eggNOG" id="COG0249">
    <property type="taxonomic scope" value="Bacteria"/>
</dbReference>
<dbReference type="HOGENOM" id="CLU_002472_3_1_9"/>
<dbReference type="Proteomes" id="UP000001172">
    <property type="component" value="Chromosome"/>
</dbReference>
<dbReference type="GO" id="GO:0005829">
    <property type="term" value="C:cytosol"/>
    <property type="evidence" value="ECO:0007669"/>
    <property type="project" value="TreeGrafter"/>
</dbReference>
<dbReference type="GO" id="GO:0005524">
    <property type="term" value="F:ATP binding"/>
    <property type="evidence" value="ECO:0007669"/>
    <property type="project" value="UniProtKB-UniRule"/>
</dbReference>
<dbReference type="GO" id="GO:0140664">
    <property type="term" value="F:ATP-dependent DNA damage sensor activity"/>
    <property type="evidence" value="ECO:0007669"/>
    <property type="project" value="InterPro"/>
</dbReference>
<dbReference type="GO" id="GO:0003684">
    <property type="term" value="F:damaged DNA binding"/>
    <property type="evidence" value="ECO:0007669"/>
    <property type="project" value="UniProtKB-UniRule"/>
</dbReference>
<dbReference type="GO" id="GO:0030983">
    <property type="term" value="F:mismatched DNA binding"/>
    <property type="evidence" value="ECO:0007669"/>
    <property type="project" value="InterPro"/>
</dbReference>
<dbReference type="GO" id="GO:0006298">
    <property type="term" value="P:mismatch repair"/>
    <property type="evidence" value="ECO:0007669"/>
    <property type="project" value="UniProtKB-UniRule"/>
</dbReference>
<dbReference type="CDD" id="cd03284">
    <property type="entry name" value="ABC_MutS1"/>
    <property type="match status" value="1"/>
</dbReference>
<dbReference type="FunFam" id="1.10.1420.10:FF:000007">
    <property type="entry name" value="DNA mismatch repair protein MutS"/>
    <property type="match status" value="1"/>
</dbReference>
<dbReference type="FunFam" id="3.40.1170.10:FF:000001">
    <property type="entry name" value="DNA mismatch repair protein MutS"/>
    <property type="match status" value="1"/>
</dbReference>
<dbReference type="FunFam" id="3.40.50.300:FF:000896">
    <property type="entry name" value="DNA mismatch repair protein MutS"/>
    <property type="match status" value="1"/>
</dbReference>
<dbReference type="Gene3D" id="1.10.1420.10">
    <property type="match status" value="2"/>
</dbReference>
<dbReference type="Gene3D" id="3.40.1170.10">
    <property type="entry name" value="DNA repair protein MutS, domain I"/>
    <property type="match status" value="1"/>
</dbReference>
<dbReference type="Gene3D" id="3.30.420.110">
    <property type="entry name" value="MutS, connector domain"/>
    <property type="match status" value="1"/>
</dbReference>
<dbReference type="Gene3D" id="3.40.50.300">
    <property type="entry name" value="P-loop containing nucleotide triphosphate hydrolases"/>
    <property type="match status" value="1"/>
</dbReference>
<dbReference type="HAMAP" id="MF_00096">
    <property type="entry name" value="MutS"/>
    <property type="match status" value="1"/>
</dbReference>
<dbReference type="InterPro" id="IPR005748">
    <property type="entry name" value="DNA_mismatch_repair_MutS"/>
</dbReference>
<dbReference type="InterPro" id="IPR007695">
    <property type="entry name" value="DNA_mismatch_repair_MutS-lik_N"/>
</dbReference>
<dbReference type="InterPro" id="IPR017261">
    <property type="entry name" value="DNA_mismatch_repair_MutS/MSH"/>
</dbReference>
<dbReference type="InterPro" id="IPR000432">
    <property type="entry name" value="DNA_mismatch_repair_MutS_C"/>
</dbReference>
<dbReference type="InterPro" id="IPR007861">
    <property type="entry name" value="DNA_mismatch_repair_MutS_clamp"/>
</dbReference>
<dbReference type="InterPro" id="IPR007696">
    <property type="entry name" value="DNA_mismatch_repair_MutS_core"/>
</dbReference>
<dbReference type="InterPro" id="IPR016151">
    <property type="entry name" value="DNA_mismatch_repair_MutS_N"/>
</dbReference>
<dbReference type="InterPro" id="IPR036187">
    <property type="entry name" value="DNA_mismatch_repair_MutS_sf"/>
</dbReference>
<dbReference type="InterPro" id="IPR007860">
    <property type="entry name" value="DNA_mmatch_repair_MutS_con_dom"/>
</dbReference>
<dbReference type="InterPro" id="IPR045076">
    <property type="entry name" value="MutS"/>
</dbReference>
<dbReference type="InterPro" id="IPR036678">
    <property type="entry name" value="MutS_con_dom_sf"/>
</dbReference>
<dbReference type="InterPro" id="IPR027417">
    <property type="entry name" value="P-loop_NTPase"/>
</dbReference>
<dbReference type="NCBIfam" id="TIGR01070">
    <property type="entry name" value="mutS1"/>
    <property type="match status" value="1"/>
</dbReference>
<dbReference type="NCBIfam" id="NF003810">
    <property type="entry name" value="PRK05399.1"/>
    <property type="match status" value="1"/>
</dbReference>
<dbReference type="PANTHER" id="PTHR11361:SF34">
    <property type="entry name" value="DNA MISMATCH REPAIR PROTEIN MSH1, MITOCHONDRIAL"/>
    <property type="match status" value="1"/>
</dbReference>
<dbReference type="PANTHER" id="PTHR11361">
    <property type="entry name" value="DNA MISMATCH REPAIR PROTEIN MUTS FAMILY MEMBER"/>
    <property type="match status" value="1"/>
</dbReference>
<dbReference type="Pfam" id="PF01624">
    <property type="entry name" value="MutS_I"/>
    <property type="match status" value="1"/>
</dbReference>
<dbReference type="Pfam" id="PF05188">
    <property type="entry name" value="MutS_II"/>
    <property type="match status" value="1"/>
</dbReference>
<dbReference type="Pfam" id="PF05192">
    <property type="entry name" value="MutS_III"/>
    <property type="match status" value="1"/>
</dbReference>
<dbReference type="Pfam" id="PF05190">
    <property type="entry name" value="MutS_IV"/>
    <property type="match status" value="1"/>
</dbReference>
<dbReference type="Pfam" id="PF00488">
    <property type="entry name" value="MutS_V"/>
    <property type="match status" value="1"/>
</dbReference>
<dbReference type="PIRSF" id="PIRSF037677">
    <property type="entry name" value="DNA_mis_repair_Msh6"/>
    <property type="match status" value="1"/>
</dbReference>
<dbReference type="SMART" id="SM00534">
    <property type="entry name" value="MUTSac"/>
    <property type="match status" value="1"/>
</dbReference>
<dbReference type="SMART" id="SM00533">
    <property type="entry name" value="MUTSd"/>
    <property type="match status" value="1"/>
</dbReference>
<dbReference type="SUPFAM" id="SSF55271">
    <property type="entry name" value="DNA repair protein MutS, domain I"/>
    <property type="match status" value="1"/>
</dbReference>
<dbReference type="SUPFAM" id="SSF53150">
    <property type="entry name" value="DNA repair protein MutS, domain II"/>
    <property type="match status" value="1"/>
</dbReference>
<dbReference type="SUPFAM" id="SSF48334">
    <property type="entry name" value="DNA repair protein MutS, domain III"/>
    <property type="match status" value="1"/>
</dbReference>
<dbReference type="SUPFAM" id="SSF52540">
    <property type="entry name" value="P-loop containing nucleoside triphosphate hydrolases"/>
    <property type="match status" value="1"/>
</dbReference>
<dbReference type="PROSITE" id="PS00486">
    <property type="entry name" value="DNA_MISMATCH_REPAIR_2"/>
    <property type="match status" value="1"/>
</dbReference>